<evidence type="ECO:0000255" key="1">
    <source>
        <dbReference type="HAMAP-Rule" id="MF_00083"/>
    </source>
</evidence>
<keyword id="KW-0963">Cytoplasm</keyword>
<keyword id="KW-0378">Hydrolase</keyword>
<keyword id="KW-1185">Reference proteome</keyword>
<keyword id="KW-0694">RNA-binding</keyword>
<keyword id="KW-0820">tRNA-binding</keyword>
<name>PTH_STRGC</name>
<proteinExistence type="inferred from homology"/>
<reference key="1">
    <citation type="journal article" date="2007" name="J. Bacteriol.">
        <title>Genome-wide transcriptional changes in Streptococcus gordonii in response to competence signaling peptide.</title>
        <authorList>
            <person name="Vickerman M.M."/>
            <person name="Iobst S."/>
            <person name="Jesionowski A.M."/>
            <person name="Gill S.R."/>
        </authorList>
    </citation>
    <scope>NUCLEOTIDE SEQUENCE [LARGE SCALE GENOMIC DNA]</scope>
    <source>
        <strain>Challis / ATCC 35105 / BCRC 15272 / CH1 / DL1 / V288</strain>
    </source>
</reference>
<organism>
    <name type="scientific">Streptococcus gordonii (strain Challis / ATCC 35105 / BCRC 15272 / CH1 / DL1 / V288)</name>
    <dbReference type="NCBI Taxonomy" id="467705"/>
    <lineage>
        <taxon>Bacteria</taxon>
        <taxon>Bacillati</taxon>
        <taxon>Bacillota</taxon>
        <taxon>Bacilli</taxon>
        <taxon>Lactobacillales</taxon>
        <taxon>Streptococcaceae</taxon>
        <taxon>Streptococcus</taxon>
    </lineage>
</organism>
<accession>A8B006</accession>
<comment type="function">
    <text evidence="1">Hydrolyzes ribosome-free peptidyl-tRNAs (with 1 or more amino acids incorporated), which drop off the ribosome during protein synthesis, or as a result of ribosome stalling.</text>
</comment>
<comment type="function">
    <text evidence="1">Catalyzes the release of premature peptidyl moieties from peptidyl-tRNA molecules trapped in stalled 50S ribosomal subunits, and thus maintains levels of free tRNAs and 50S ribosomes.</text>
</comment>
<comment type="catalytic activity">
    <reaction evidence="1">
        <text>an N-acyl-L-alpha-aminoacyl-tRNA + H2O = an N-acyl-L-amino acid + a tRNA + H(+)</text>
        <dbReference type="Rhea" id="RHEA:54448"/>
        <dbReference type="Rhea" id="RHEA-COMP:10123"/>
        <dbReference type="Rhea" id="RHEA-COMP:13883"/>
        <dbReference type="ChEBI" id="CHEBI:15377"/>
        <dbReference type="ChEBI" id="CHEBI:15378"/>
        <dbReference type="ChEBI" id="CHEBI:59874"/>
        <dbReference type="ChEBI" id="CHEBI:78442"/>
        <dbReference type="ChEBI" id="CHEBI:138191"/>
        <dbReference type="EC" id="3.1.1.29"/>
    </reaction>
</comment>
<comment type="subunit">
    <text evidence="1">Monomer.</text>
</comment>
<comment type="subcellular location">
    <subcellularLocation>
        <location evidence="1">Cytoplasm</location>
    </subcellularLocation>
</comment>
<comment type="similarity">
    <text evidence="1">Belongs to the PTH family.</text>
</comment>
<feature type="chain" id="PRO_1000075362" description="Peptidyl-tRNA hydrolase">
    <location>
        <begin position="1"/>
        <end position="189"/>
    </location>
</feature>
<feature type="active site" description="Proton acceptor" evidence="1">
    <location>
        <position position="20"/>
    </location>
</feature>
<feature type="binding site" evidence="1">
    <location>
        <position position="15"/>
    </location>
    <ligand>
        <name>tRNA</name>
        <dbReference type="ChEBI" id="CHEBI:17843"/>
    </ligand>
</feature>
<feature type="binding site" evidence="1">
    <location>
        <position position="66"/>
    </location>
    <ligand>
        <name>tRNA</name>
        <dbReference type="ChEBI" id="CHEBI:17843"/>
    </ligand>
</feature>
<feature type="binding site" evidence="1">
    <location>
        <position position="68"/>
    </location>
    <ligand>
        <name>tRNA</name>
        <dbReference type="ChEBI" id="CHEBI:17843"/>
    </ligand>
</feature>
<feature type="binding site" evidence="1">
    <location>
        <position position="114"/>
    </location>
    <ligand>
        <name>tRNA</name>
        <dbReference type="ChEBI" id="CHEBI:17843"/>
    </ligand>
</feature>
<feature type="site" description="Discriminates between blocked and unblocked aminoacyl-tRNA" evidence="1">
    <location>
        <position position="10"/>
    </location>
</feature>
<feature type="site" description="Stabilizes the basic form of H active site to accept a proton" evidence="1">
    <location>
        <position position="93"/>
    </location>
</feature>
<gene>
    <name evidence="1" type="primary">pth</name>
    <name type="ordered locus">SGO_2141</name>
</gene>
<dbReference type="EC" id="3.1.1.29" evidence="1"/>
<dbReference type="EMBL" id="CP000725">
    <property type="protein sequence ID" value="ABV10635.1"/>
    <property type="molecule type" value="Genomic_DNA"/>
</dbReference>
<dbReference type="RefSeq" id="WP_012131076.1">
    <property type="nucleotide sequence ID" value="NC_009785.1"/>
</dbReference>
<dbReference type="SMR" id="A8B006"/>
<dbReference type="STRING" id="467705.SGO_2141"/>
<dbReference type="KEGG" id="sgo:SGO_2141"/>
<dbReference type="eggNOG" id="COG0193">
    <property type="taxonomic scope" value="Bacteria"/>
</dbReference>
<dbReference type="HOGENOM" id="CLU_062456_4_1_9"/>
<dbReference type="Proteomes" id="UP000001131">
    <property type="component" value="Chromosome"/>
</dbReference>
<dbReference type="GO" id="GO:0005737">
    <property type="term" value="C:cytoplasm"/>
    <property type="evidence" value="ECO:0007669"/>
    <property type="project" value="UniProtKB-SubCell"/>
</dbReference>
<dbReference type="GO" id="GO:0004045">
    <property type="term" value="F:peptidyl-tRNA hydrolase activity"/>
    <property type="evidence" value="ECO:0007669"/>
    <property type="project" value="UniProtKB-UniRule"/>
</dbReference>
<dbReference type="GO" id="GO:0000049">
    <property type="term" value="F:tRNA binding"/>
    <property type="evidence" value="ECO:0007669"/>
    <property type="project" value="UniProtKB-UniRule"/>
</dbReference>
<dbReference type="GO" id="GO:0006515">
    <property type="term" value="P:protein quality control for misfolded or incompletely synthesized proteins"/>
    <property type="evidence" value="ECO:0007669"/>
    <property type="project" value="UniProtKB-UniRule"/>
</dbReference>
<dbReference type="GO" id="GO:0072344">
    <property type="term" value="P:rescue of stalled ribosome"/>
    <property type="evidence" value="ECO:0007669"/>
    <property type="project" value="UniProtKB-UniRule"/>
</dbReference>
<dbReference type="CDD" id="cd00462">
    <property type="entry name" value="PTH"/>
    <property type="match status" value="1"/>
</dbReference>
<dbReference type="FunFam" id="3.40.50.1470:FF:000001">
    <property type="entry name" value="Peptidyl-tRNA hydrolase"/>
    <property type="match status" value="1"/>
</dbReference>
<dbReference type="Gene3D" id="3.40.50.1470">
    <property type="entry name" value="Peptidyl-tRNA hydrolase"/>
    <property type="match status" value="1"/>
</dbReference>
<dbReference type="HAMAP" id="MF_00083">
    <property type="entry name" value="Pept_tRNA_hydro_bact"/>
    <property type="match status" value="1"/>
</dbReference>
<dbReference type="InterPro" id="IPR001328">
    <property type="entry name" value="Pept_tRNA_hydro"/>
</dbReference>
<dbReference type="InterPro" id="IPR018171">
    <property type="entry name" value="Pept_tRNA_hydro_CS"/>
</dbReference>
<dbReference type="InterPro" id="IPR036416">
    <property type="entry name" value="Pept_tRNA_hydro_sf"/>
</dbReference>
<dbReference type="NCBIfam" id="TIGR00447">
    <property type="entry name" value="pth"/>
    <property type="match status" value="1"/>
</dbReference>
<dbReference type="PANTHER" id="PTHR17224">
    <property type="entry name" value="PEPTIDYL-TRNA HYDROLASE"/>
    <property type="match status" value="1"/>
</dbReference>
<dbReference type="PANTHER" id="PTHR17224:SF1">
    <property type="entry name" value="PEPTIDYL-TRNA HYDROLASE"/>
    <property type="match status" value="1"/>
</dbReference>
<dbReference type="Pfam" id="PF01195">
    <property type="entry name" value="Pept_tRNA_hydro"/>
    <property type="match status" value="1"/>
</dbReference>
<dbReference type="SUPFAM" id="SSF53178">
    <property type="entry name" value="Peptidyl-tRNA hydrolase-like"/>
    <property type="match status" value="1"/>
</dbReference>
<dbReference type="PROSITE" id="PS01195">
    <property type="entry name" value="PEPT_TRNA_HYDROL_1"/>
    <property type="match status" value="1"/>
</dbReference>
<dbReference type="PROSITE" id="PS01196">
    <property type="entry name" value="PEPT_TRNA_HYDROL_2"/>
    <property type="match status" value="1"/>
</dbReference>
<protein>
    <recommendedName>
        <fullName evidence="1">Peptidyl-tRNA hydrolase</fullName>
        <shortName evidence="1">Pth</shortName>
        <ecNumber evidence="1">3.1.1.29</ecNumber>
    </recommendedName>
</protein>
<sequence length="189" mass="21315">MTKLIVGLGNPGDKYFETKHNVGFMLVDKLCKDLNLKFTVDKIFQSEIASTFLNGEKIYFIKPTTFMNESGKAVHALLTYYGLEVEDLLVIYDDLDMEVGKIRLRAKGSAGGHNGIKSIIKHIGTQDFKRVKIGIGRPKEGMTVVHHVLGKFDRDDYITILNTLDKVDNAVNYYLQSGNFEQAMQKYNG</sequence>